<reference key="1">
    <citation type="journal article" date="2004" name="Nucleic Acids Res.">
        <title>Whole genome comparisons of serotype 4b and 1/2a strains of the food-borne pathogen Listeria monocytogenes reveal new insights into the core genome components of this species.</title>
        <authorList>
            <person name="Nelson K.E."/>
            <person name="Fouts D.E."/>
            <person name="Mongodin E.F."/>
            <person name="Ravel J."/>
            <person name="DeBoy R.T."/>
            <person name="Kolonay J.F."/>
            <person name="Rasko D.A."/>
            <person name="Angiuoli S.V."/>
            <person name="Gill S.R."/>
            <person name="Paulsen I.T."/>
            <person name="Peterson J.D."/>
            <person name="White O."/>
            <person name="Nelson W.C."/>
            <person name="Nierman W.C."/>
            <person name="Beanan M.J."/>
            <person name="Brinkac L.M."/>
            <person name="Daugherty S.C."/>
            <person name="Dodson R.J."/>
            <person name="Durkin A.S."/>
            <person name="Madupu R."/>
            <person name="Haft D.H."/>
            <person name="Selengut J."/>
            <person name="Van Aken S.E."/>
            <person name="Khouri H.M."/>
            <person name="Fedorova N."/>
            <person name="Forberger H.A."/>
            <person name="Tran B."/>
            <person name="Kathariou S."/>
            <person name="Wonderling L.D."/>
            <person name="Uhlich G.A."/>
            <person name="Bayles D.O."/>
            <person name="Luchansky J.B."/>
            <person name="Fraser C.M."/>
        </authorList>
    </citation>
    <scope>NUCLEOTIDE SEQUENCE [LARGE SCALE GENOMIC DNA]</scope>
    <source>
        <strain>F2365</strain>
    </source>
</reference>
<protein>
    <recommendedName>
        <fullName evidence="1">Putative ribose-phosphate pyrophosphokinase 2</fullName>
        <shortName evidence="1">RPPK 2</shortName>
        <ecNumber evidence="1">2.7.6.1</ecNumber>
    </recommendedName>
    <alternativeName>
        <fullName evidence="1">5-phospho-D-ribosyl alpha-1-diphosphate synthase 2</fullName>
    </alternativeName>
    <alternativeName>
        <fullName evidence="1">Phosphoribosyl diphosphate synthase 2</fullName>
    </alternativeName>
    <alternativeName>
        <fullName evidence="1">Phosphoribosyl pyrophosphate synthase 2</fullName>
        <shortName evidence="1">P-Rib-PP synthase 2</shortName>
        <shortName evidence="1">PRPP synthase 2</shortName>
        <shortName evidence="1">PRPPase 2</shortName>
    </alternativeName>
</protein>
<evidence type="ECO:0000255" key="1">
    <source>
        <dbReference type="HAMAP-Rule" id="MF_00583"/>
    </source>
</evidence>
<gene>
    <name evidence="1" type="primary">prs2</name>
    <name type="ordered locus">LMOf2365_0538</name>
</gene>
<comment type="function">
    <text evidence="1">Involved in the biosynthesis of the central metabolite phospho-alpha-D-ribosyl-1-pyrophosphate (PRPP) via the transfer of pyrophosphoryl group from ATP to 1-hydroxyl of ribose-5-phosphate (Rib-5-P).</text>
</comment>
<comment type="catalytic activity">
    <reaction evidence="1">
        <text>D-ribose 5-phosphate + ATP = 5-phospho-alpha-D-ribose 1-diphosphate + AMP + H(+)</text>
        <dbReference type="Rhea" id="RHEA:15609"/>
        <dbReference type="ChEBI" id="CHEBI:15378"/>
        <dbReference type="ChEBI" id="CHEBI:30616"/>
        <dbReference type="ChEBI" id="CHEBI:58017"/>
        <dbReference type="ChEBI" id="CHEBI:78346"/>
        <dbReference type="ChEBI" id="CHEBI:456215"/>
        <dbReference type="EC" id="2.7.6.1"/>
    </reaction>
</comment>
<comment type="cofactor">
    <cofactor evidence="1">
        <name>Mg(2+)</name>
        <dbReference type="ChEBI" id="CHEBI:18420"/>
    </cofactor>
    <text evidence="1">Binds 2 Mg(2+) ions per subunit.</text>
</comment>
<comment type="pathway">
    <text evidence="1">Metabolic intermediate biosynthesis; 5-phospho-alpha-D-ribose 1-diphosphate biosynthesis; 5-phospho-alpha-D-ribose 1-diphosphate from D-ribose 5-phosphate (route I): step 1/1.</text>
</comment>
<comment type="subunit">
    <text evidence="1">Homohexamer.</text>
</comment>
<comment type="subcellular location">
    <subcellularLocation>
        <location evidence="1">Cytoplasm</location>
    </subcellularLocation>
</comment>
<comment type="similarity">
    <text evidence="1">Belongs to the ribose-phosphate pyrophosphokinase family. Class I subfamily.</text>
</comment>
<comment type="caution">
    <text evidence="1">Part of a set of proteins in which some residues (ACT_SITE, NP_BIND, REGION and BINDING) are not conserved.</text>
</comment>
<sequence length="311" mass="34346">MAGKMKLFSVTSERPLATKIADYLDIPLCEVELQKFSDGEVKINIEESIRGTNAYVVQSMNSNVNERLMELLIMVDALKRASVHSINIIMPYYGYARQDRKARSREPITAKLMANLIQRAGADRLITVDLHAAQIQGFFNIPIDHLSAIPLIGDYLIENYGEKDVVVVAPDHSGVVRARRIADRLNAPIAILNRKPRPHEDEIMSVIGDVKGKVAIVVDDIIDTGVRATTSADILLEKGAVEVIACATHSVMAGNATERLQNSNIKEVITSDSIDLPEDKQFDKLTTISIGRILGRAIEGVQENRSLHPLF</sequence>
<accession>Q723E1</accession>
<proteinExistence type="inferred from homology"/>
<organism>
    <name type="scientific">Listeria monocytogenes serotype 4b (strain F2365)</name>
    <dbReference type="NCBI Taxonomy" id="265669"/>
    <lineage>
        <taxon>Bacteria</taxon>
        <taxon>Bacillati</taxon>
        <taxon>Bacillota</taxon>
        <taxon>Bacilli</taxon>
        <taxon>Bacillales</taxon>
        <taxon>Listeriaceae</taxon>
        <taxon>Listeria</taxon>
    </lineage>
</organism>
<name>KPRS2_LISMF</name>
<feature type="chain" id="PRO_0000141156" description="Putative ribose-phosphate pyrophosphokinase 2">
    <location>
        <begin position="1"/>
        <end position="311"/>
    </location>
</feature>
<feature type="binding site" evidence="1">
    <location>
        <begin position="38"/>
        <end position="40"/>
    </location>
    <ligand>
        <name>ATP</name>
        <dbReference type="ChEBI" id="CHEBI:30616"/>
    </ligand>
</feature>
<feature type="binding site" evidence="1">
    <location>
        <begin position="97"/>
        <end position="98"/>
    </location>
    <ligand>
        <name>ATP</name>
        <dbReference type="ChEBI" id="CHEBI:30616"/>
    </ligand>
</feature>
<feature type="binding site" evidence="1">
    <location>
        <position position="131"/>
    </location>
    <ligand>
        <name>Mg(2+)</name>
        <dbReference type="ChEBI" id="CHEBI:18420"/>
        <label>1</label>
    </ligand>
</feature>
<feature type="binding site" evidence="1">
    <location>
        <position position="171"/>
    </location>
    <ligand>
        <name>Mg(2+)</name>
        <dbReference type="ChEBI" id="CHEBI:18420"/>
        <label>2</label>
    </ligand>
</feature>
<feature type="binding site" evidence="1">
    <location>
        <position position="219"/>
    </location>
    <ligand>
        <name>D-ribose 5-phosphate</name>
        <dbReference type="ChEBI" id="CHEBI:78346"/>
    </ligand>
</feature>
<dbReference type="EC" id="2.7.6.1" evidence="1"/>
<dbReference type="EMBL" id="AE017262">
    <property type="protein sequence ID" value="AAT03320.1"/>
    <property type="molecule type" value="Genomic_DNA"/>
</dbReference>
<dbReference type="RefSeq" id="WP_003725720.1">
    <property type="nucleotide sequence ID" value="NC_002973.6"/>
</dbReference>
<dbReference type="SMR" id="Q723E1"/>
<dbReference type="KEGG" id="lmf:LMOf2365_0538"/>
<dbReference type="HOGENOM" id="CLU_033546_2_0_9"/>
<dbReference type="UniPathway" id="UPA00087">
    <property type="reaction ID" value="UER00172"/>
</dbReference>
<dbReference type="GO" id="GO:0005737">
    <property type="term" value="C:cytoplasm"/>
    <property type="evidence" value="ECO:0007669"/>
    <property type="project" value="UniProtKB-SubCell"/>
</dbReference>
<dbReference type="GO" id="GO:0002189">
    <property type="term" value="C:ribose phosphate diphosphokinase complex"/>
    <property type="evidence" value="ECO:0007669"/>
    <property type="project" value="TreeGrafter"/>
</dbReference>
<dbReference type="GO" id="GO:0005524">
    <property type="term" value="F:ATP binding"/>
    <property type="evidence" value="ECO:0007669"/>
    <property type="project" value="UniProtKB-KW"/>
</dbReference>
<dbReference type="GO" id="GO:0016301">
    <property type="term" value="F:kinase activity"/>
    <property type="evidence" value="ECO:0007669"/>
    <property type="project" value="UniProtKB-KW"/>
</dbReference>
<dbReference type="GO" id="GO:0000287">
    <property type="term" value="F:magnesium ion binding"/>
    <property type="evidence" value="ECO:0007669"/>
    <property type="project" value="UniProtKB-UniRule"/>
</dbReference>
<dbReference type="GO" id="GO:0004749">
    <property type="term" value="F:ribose phosphate diphosphokinase activity"/>
    <property type="evidence" value="ECO:0007669"/>
    <property type="project" value="UniProtKB-UniRule"/>
</dbReference>
<dbReference type="GO" id="GO:0006015">
    <property type="term" value="P:5-phosphoribose 1-diphosphate biosynthetic process"/>
    <property type="evidence" value="ECO:0007669"/>
    <property type="project" value="UniProtKB-UniRule"/>
</dbReference>
<dbReference type="GO" id="GO:0006164">
    <property type="term" value="P:purine nucleotide biosynthetic process"/>
    <property type="evidence" value="ECO:0007669"/>
    <property type="project" value="TreeGrafter"/>
</dbReference>
<dbReference type="GO" id="GO:0009156">
    <property type="term" value="P:ribonucleoside monophosphate biosynthetic process"/>
    <property type="evidence" value="ECO:0007669"/>
    <property type="project" value="InterPro"/>
</dbReference>
<dbReference type="CDD" id="cd06223">
    <property type="entry name" value="PRTases_typeI"/>
    <property type="match status" value="1"/>
</dbReference>
<dbReference type="FunFam" id="3.40.50.2020:FF:000066">
    <property type="entry name" value="Ribose-phosphate pyrophosphokinase 2"/>
    <property type="match status" value="1"/>
</dbReference>
<dbReference type="Gene3D" id="3.40.50.2020">
    <property type="match status" value="2"/>
</dbReference>
<dbReference type="HAMAP" id="MF_00583_B">
    <property type="entry name" value="RibP_PPkinase_B"/>
    <property type="match status" value="1"/>
</dbReference>
<dbReference type="InterPro" id="IPR000842">
    <property type="entry name" value="PRib_PP_synth_CS"/>
</dbReference>
<dbReference type="InterPro" id="IPR029099">
    <property type="entry name" value="Pribosyltran_N"/>
</dbReference>
<dbReference type="InterPro" id="IPR000836">
    <property type="entry name" value="PRibTrfase_dom"/>
</dbReference>
<dbReference type="InterPro" id="IPR029057">
    <property type="entry name" value="PRTase-like"/>
</dbReference>
<dbReference type="InterPro" id="IPR005946">
    <property type="entry name" value="Rib-P_diPkinase"/>
</dbReference>
<dbReference type="InterPro" id="IPR037515">
    <property type="entry name" value="Rib-P_diPkinase_bac"/>
</dbReference>
<dbReference type="NCBIfam" id="NF002320">
    <property type="entry name" value="PRK01259.1"/>
    <property type="match status" value="1"/>
</dbReference>
<dbReference type="NCBIfam" id="TIGR01251">
    <property type="entry name" value="ribP_PPkin"/>
    <property type="match status" value="1"/>
</dbReference>
<dbReference type="PANTHER" id="PTHR10210">
    <property type="entry name" value="RIBOSE-PHOSPHATE DIPHOSPHOKINASE FAMILY MEMBER"/>
    <property type="match status" value="1"/>
</dbReference>
<dbReference type="PANTHER" id="PTHR10210:SF41">
    <property type="entry name" value="RIBOSE-PHOSPHATE PYROPHOSPHOKINASE 1, CHLOROPLASTIC"/>
    <property type="match status" value="1"/>
</dbReference>
<dbReference type="Pfam" id="PF14572">
    <property type="entry name" value="Pribosyl_synth"/>
    <property type="match status" value="1"/>
</dbReference>
<dbReference type="Pfam" id="PF13793">
    <property type="entry name" value="Pribosyltran_N"/>
    <property type="match status" value="1"/>
</dbReference>
<dbReference type="SMART" id="SM01400">
    <property type="entry name" value="Pribosyltran_N"/>
    <property type="match status" value="1"/>
</dbReference>
<dbReference type="SUPFAM" id="SSF53271">
    <property type="entry name" value="PRTase-like"/>
    <property type="match status" value="2"/>
</dbReference>
<dbReference type="PROSITE" id="PS00114">
    <property type="entry name" value="PRPP_SYNTHASE"/>
    <property type="match status" value="1"/>
</dbReference>
<keyword id="KW-0067">ATP-binding</keyword>
<keyword id="KW-0963">Cytoplasm</keyword>
<keyword id="KW-0418">Kinase</keyword>
<keyword id="KW-0460">Magnesium</keyword>
<keyword id="KW-0479">Metal-binding</keyword>
<keyword id="KW-0545">Nucleotide biosynthesis</keyword>
<keyword id="KW-0547">Nucleotide-binding</keyword>
<keyword id="KW-0808">Transferase</keyword>